<comment type="function">
    <text evidence="1 3 4">Presumably involved in the export of the biofilm adhesin polysaccharide poly-beta-1,6-N-acetyl-D-glucosamine (PNAG, also referred to as PIA) across the cell membrane (By similarity). Is essential for long-chain PIA synthesis.</text>
</comment>
<comment type="subcellular location">
    <subcellularLocation>
        <location evidence="5">Cell membrane</location>
        <topology evidence="5">Multi-pass membrane protein</topology>
    </subcellularLocation>
</comment>
<comment type="disruption phenotype">
    <text evidence="3">Complete loss of the intercellular adhesion phenotype.</text>
</comment>
<comment type="similarity">
    <text evidence="5">Belongs to the acyltransferase 3 family.</text>
</comment>
<name>ICAC_STAEQ</name>
<evidence type="ECO:0000250" key="1"/>
<evidence type="ECO:0000255" key="2"/>
<evidence type="ECO:0000269" key="3">
    <source>
    </source>
</evidence>
<evidence type="ECO:0000269" key="4">
    <source>
    </source>
</evidence>
<evidence type="ECO:0000305" key="5"/>
<accession>Q5HKP7</accession>
<accession>Q54068</accession>
<proteinExistence type="evidence at protein level"/>
<protein>
    <recommendedName>
        <fullName>Probable poly-beta-1,6-N-acetyl-D-glucosamine export protein</fullName>
        <shortName>PGA export protein</shortName>
        <shortName>Poly-beta-1,6-GlcNAc export protein</shortName>
    </recommendedName>
    <alternativeName>
        <fullName>Biofilm polysaccharide intercellular adhesin export protein</fullName>
        <shortName>Biofilm PIA export protein</shortName>
    </alternativeName>
    <alternativeName>
        <fullName>Intercellular adhesion protein C</fullName>
    </alternativeName>
</protein>
<gene>
    <name type="primary">icaC</name>
    <name type="ordered locus">SERP2296</name>
</gene>
<reference key="1">
    <citation type="journal article" date="1996" name="Mol. Microbiol.">
        <title>Molecular basis of intercellular adhesion in the biofilm-forming Staphylococcus epidermidis.</title>
        <authorList>
            <person name="Heilmann C."/>
            <person name="Schweitzer O."/>
            <person name="Gerke C."/>
            <person name="Vanittanakom N."/>
            <person name="Mack D."/>
            <person name="Goetz F."/>
        </authorList>
    </citation>
    <scope>NUCLEOTIDE SEQUENCE [GENOMIC DNA]</scope>
    <scope>ROLE IN BIOFILM FORMATION</scope>
    <scope>DISRUPTION PHENOTYPE</scope>
</reference>
<reference key="2">
    <citation type="journal article" date="2005" name="J. Bacteriol.">
        <title>Insights on evolution of virulence and resistance from the complete genome analysis of an early methicillin-resistant Staphylococcus aureus strain and a biofilm-producing methicillin-resistant Staphylococcus epidermidis strain.</title>
        <authorList>
            <person name="Gill S.R."/>
            <person name="Fouts D.E."/>
            <person name="Archer G.L."/>
            <person name="Mongodin E.F."/>
            <person name="DeBoy R.T."/>
            <person name="Ravel J."/>
            <person name="Paulsen I.T."/>
            <person name="Kolonay J.F."/>
            <person name="Brinkac L.M."/>
            <person name="Beanan M.J."/>
            <person name="Dodson R.J."/>
            <person name="Daugherty S.C."/>
            <person name="Madupu R."/>
            <person name="Angiuoli S.V."/>
            <person name="Durkin A.S."/>
            <person name="Haft D.H."/>
            <person name="Vamathevan J.J."/>
            <person name="Khouri H."/>
            <person name="Utterback T.R."/>
            <person name="Lee C."/>
            <person name="Dimitrov G."/>
            <person name="Jiang L."/>
            <person name="Qin H."/>
            <person name="Weidman J."/>
            <person name="Tran K."/>
            <person name="Kang K.H."/>
            <person name="Hance I.R."/>
            <person name="Nelson K.E."/>
            <person name="Fraser C.M."/>
        </authorList>
    </citation>
    <scope>NUCLEOTIDE SEQUENCE [LARGE SCALE GENOMIC DNA]</scope>
    <source>
        <strain>ATCC 35984 / DSM 28319 / BCRC 17069 / CCUG 31568 / BM 3577 / RP62A</strain>
    </source>
</reference>
<reference key="3">
    <citation type="journal article" date="1998" name="J. Biol. Chem.">
        <title>Characterization of the N-acetylglucosaminyltransferase activity involved in the biosynthesis of the Staphylococcus epidermidis polysaccharide intercellular adhesin.</title>
        <authorList>
            <person name="Gerke C."/>
            <person name="Kraft A."/>
            <person name="Sussmuth R."/>
            <person name="Schweitzer O."/>
            <person name="Goetz F."/>
        </authorList>
    </citation>
    <scope>FUNCTION IN PIA SYNTHESIS</scope>
</reference>
<sequence length="355" mass="42090">MKKNKLELVYLRAFICVIIIVTHLLTQITLENEQMSDSSLILQYYIRNIFIFGTPSFIILSQLLTTLNYESVTINYLFSRFKYIFIPYLLIGLFYSYSESLITASSFKKQFIENVVLGQWYGYFIIIIMQFFVLSYIIYKINFRLFNSKILLLLAFIVQQSYLHYFLNNDTFHQFMTHYYPLSENTMILGWIFYFFLGGYIGYNYEKILSFLEKYLIIVIMLTLGAYVLFIAVSGSDYWNVTSFTYTLTLYNSVMFFLLLGVCMHFKTMLLNTIKAISAFSFFIYLLHPIILDSLFAYTNIFEDNTIVFLAISLLMILGICIGVGMMLREFYIFRFVIGKQPYKLQFDQYQPNWN</sequence>
<keyword id="KW-1003">Cell membrane</keyword>
<keyword id="KW-0472">Membrane</keyword>
<keyword id="KW-1185">Reference proteome</keyword>
<keyword id="KW-0812">Transmembrane</keyword>
<keyword id="KW-1133">Transmembrane helix</keyword>
<keyword id="KW-0813">Transport</keyword>
<feature type="chain" id="PRO_0000208079" description="Probable poly-beta-1,6-N-acetyl-D-glucosamine export protein">
    <location>
        <begin position="1"/>
        <end position="355"/>
    </location>
</feature>
<feature type="transmembrane region" description="Helical" evidence="2">
    <location>
        <begin position="13"/>
        <end position="30"/>
    </location>
</feature>
<feature type="transmembrane region" description="Helical" evidence="2">
    <location>
        <begin position="45"/>
        <end position="67"/>
    </location>
</feature>
<feature type="transmembrane region" description="Helical" evidence="2">
    <location>
        <begin position="74"/>
        <end position="96"/>
    </location>
</feature>
<feature type="transmembrane region" description="Helical" evidence="2">
    <location>
        <begin position="116"/>
        <end position="138"/>
    </location>
</feature>
<feature type="transmembrane region" description="Helical" evidence="2">
    <location>
        <begin position="145"/>
        <end position="167"/>
    </location>
</feature>
<feature type="transmembrane region" description="Helical" evidence="2">
    <location>
        <begin position="187"/>
        <end position="204"/>
    </location>
</feature>
<feature type="transmembrane region" description="Helical" evidence="2">
    <location>
        <begin position="211"/>
        <end position="233"/>
    </location>
</feature>
<feature type="transmembrane region" description="Helical" evidence="2">
    <location>
        <begin position="243"/>
        <end position="262"/>
    </location>
</feature>
<feature type="transmembrane region" description="Helical" evidence="2">
    <location>
        <begin position="269"/>
        <end position="291"/>
    </location>
</feature>
<feature type="transmembrane region" description="Helical" evidence="2">
    <location>
        <begin position="306"/>
        <end position="328"/>
    </location>
</feature>
<organism>
    <name type="scientific">Staphylococcus epidermidis (strain ATCC 35984 / DSM 28319 / BCRC 17069 / CCUG 31568 / BM 3577 / RP62A)</name>
    <dbReference type="NCBI Taxonomy" id="176279"/>
    <lineage>
        <taxon>Bacteria</taxon>
        <taxon>Bacillati</taxon>
        <taxon>Bacillota</taxon>
        <taxon>Bacilli</taxon>
        <taxon>Bacillales</taxon>
        <taxon>Staphylococcaceae</taxon>
        <taxon>Staphylococcus</taxon>
    </lineage>
</organism>
<dbReference type="EMBL" id="U43366">
    <property type="protein sequence ID" value="AAC06119.1"/>
    <property type="molecule type" value="Genomic_DNA"/>
</dbReference>
<dbReference type="EMBL" id="CP000029">
    <property type="protein sequence ID" value="AAW53185.1"/>
    <property type="molecule type" value="Genomic_DNA"/>
</dbReference>
<dbReference type="PIR" id="S77610">
    <property type="entry name" value="S77610"/>
</dbReference>
<dbReference type="RefSeq" id="WP_002484505.1">
    <property type="nucleotide sequence ID" value="NC_002976.3"/>
</dbReference>
<dbReference type="STRING" id="176279.SERP2296"/>
<dbReference type="KEGG" id="ser:SERP2296"/>
<dbReference type="eggNOG" id="COG3936">
    <property type="taxonomic scope" value="Bacteria"/>
</dbReference>
<dbReference type="HOGENOM" id="CLU_064947_1_0_9"/>
<dbReference type="Proteomes" id="UP000000531">
    <property type="component" value="Chromosome"/>
</dbReference>
<dbReference type="GO" id="GO:0005886">
    <property type="term" value="C:plasma membrane"/>
    <property type="evidence" value="ECO:0007669"/>
    <property type="project" value="UniProtKB-SubCell"/>
</dbReference>
<dbReference type="GO" id="GO:0016413">
    <property type="term" value="F:O-acetyltransferase activity"/>
    <property type="evidence" value="ECO:0007669"/>
    <property type="project" value="TreeGrafter"/>
</dbReference>
<dbReference type="GO" id="GO:0009246">
    <property type="term" value="P:enterobacterial common antigen biosynthetic process"/>
    <property type="evidence" value="ECO:0007669"/>
    <property type="project" value="TreeGrafter"/>
</dbReference>
<dbReference type="InterPro" id="IPR002656">
    <property type="entry name" value="Acyl_transf_3_dom"/>
</dbReference>
<dbReference type="PANTHER" id="PTHR40074">
    <property type="entry name" value="O-ACETYLTRANSFERASE WECH"/>
    <property type="match status" value="1"/>
</dbReference>
<dbReference type="PANTHER" id="PTHR40074:SF2">
    <property type="entry name" value="O-ACETYLTRANSFERASE WECH"/>
    <property type="match status" value="1"/>
</dbReference>
<dbReference type="Pfam" id="PF01757">
    <property type="entry name" value="Acyl_transf_3"/>
    <property type="match status" value="1"/>
</dbReference>